<proteinExistence type="inferred from homology"/>
<organism>
    <name type="scientific">Salmonella paratyphi A (strain ATCC 9150 / SARB42)</name>
    <dbReference type="NCBI Taxonomy" id="295319"/>
    <lineage>
        <taxon>Bacteria</taxon>
        <taxon>Pseudomonadati</taxon>
        <taxon>Pseudomonadota</taxon>
        <taxon>Gammaproteobacteria</taxon>
        <taxon>Enterobacterales</taxon>
        <taxon>Enterobacteriaceae</taxon>
        <taxon>Salmonella</taxon>
    </lineage>
</organism>
<accession>Q5PN10</accession>
<reference key="1">
    <citation type="journal article" date="2004" name="Nat. Genet.">
        <title>Comparison of genome degradation in Paratyphi A and Typhi, human-restricted serovars of Salmonella enterica that cause typhoid.</title>
        <authorList>
            <person name="McClelland M."/>
            <person name="Sanderson K.E."/>
            <person name="Clifton S.W."/>
            <person name="Latreille P."/>
            <person name="Porwollik S."/>
            <person name="Sabo A."/>
            <person name="Meyer R."/>
            <person name="Bieri T."/>
            <person name="Ozersky P."/>
            <person name="McLellan M."/>
            <person name="Harkins C.R."/>
            <person name="Wang C."/>
            <person name="Nguyen C."/>
            <person name="Berghoff A."/>
            <person name="Elliott G."/>
            <person name="Kohlberg S."/>
            <person name="Strong C."/>
            <person name="Du F."/>
            <person name="Carter J."/>
            <person name="Kremizki C."/>
            <person name="Layman D."/>
            <person name="Leonard S."/>
            <person name="Sun H."/>
            <person name="Fulton L."/>
            <person name="Nash W."/>
            <person name="Miner T."/>
            <person name="Minx P."/>
            <person name="Delehaunty K."/>
            <person name="Fronick C."/>
            <person name="Magrini V."/>
            <person name="Nhan M."/>
            <person name="Warren W."/>
            <person name="Florea L."/>
            <person name="Spieth J."/>
            <person name="Wilson R.K."/>
        </authorList>
    </citation>
    <scope>NUCLEOTIDE SEQUENCE [LARGE SCALE GENOMIC DNA]</scope>
    <source>
        <strain>ATCC 9150 / SARB42</strain>
    </source>
</reference>
<name>NHAP2_SALPA</name>
<evidence type="ECO:0000255" key="1">
    <source>
        <dbReference type="HAMAP-Rule" id="MF_01075"/>
    </source>
</evidence>
<dbReference type="EMBL" id="CP000026">
    <property type="protein sequence ID" value="AAV77043.1"/>
    <property type="molecule type" value="Genomic_DNA"/>
</dbReference>
<dbReference type="RefSeq" id="WP_000338376.1">
    <property type="nucleotide sequence ID" value="NC_006511.1"/>
</dbReference>
<dbReference type="SMR" id="Q5PN10"/>
<dbReference type="KEGG" id="spt:SPA1072"/>
<dbReference type="HOGENOM" id="CLU_005912_9_2_6"/>
<dbReference type="Proteomes" id="UP000008185">
    <property type="component" value="Chromosome"/>
</dbReference>
<dbReference type="GO" id="GO:0005886">
    <property type="term" value="C:plasma membrane"/>
    <property type="evidence" value="ECO:0007669"/>
    <property type="project" value="UniProtKB-SubCell"/>
</dbReference>
<dbReference type="GO" id="GO:0050660">
    <property type="term" value="F:flavin adenine dinucleotide binding"/>
    <property type="evidence" value="ECO:0007669"/>
    <property type="project" value="InterPro"/>
</dbReference>
<dbReference type="GO" id="GO:0015386">
    <property type="term" value="F:potassium:proton antiporter activity"/>
    <property type="evidence" value="ECO:0007669"/>
    <property type="project" value="UniProtKB-UniRule"/>
</dbReference>
<dbReference type="GO" id="GO:0006884">
    <property type="term" value="P:cell volume homeostasis"/>
    <property type="evidence" value="ECO:0007669"/>
    <property type="project" value="InterPro"/>
</dbReference>
<dbReference type="FunFam" id="1.20.1530.20:FF:000002">
    <property type="entry name" value="K(+)/H(+) antiporter NhaP2"/>
    <property type="match status" value="1"/>
</dbReference>
<dbReference type="Gene3D" id="1.20.1530.20">
    <property type="match status" value="1"/>
</dbReference>
<dbReference type="Gene3D" id="3.30.465.10">
    <property type="match status" value="1"/>
</dbReference>
<dbReference type="Gene3D" id="3.30.70.1450">
    <property type="entry name" value="Regulator of K+ conductance, C-terminal domain"/>
    <property type="match status" value="1"/>
</dbReference>
<dbReference type="HAMAP" id="MF_01075">
    <property type="entry name" value="NhaP2"/>
    <property type="match status" value="1"/>
</dbReference>
<dbReference type="InterPro" id="IPR006153">
    <property type="entry name" value="Cation/H_exchanger_TM"/>
</dbReference>
<dbReference type="InterPro" id="IPR036318">
    <property type="entry name" value="FAD-bd_PCMH-like_sf"/>
</dbReference>
<dbReference type="InterPro" id="IPR016169">
    <property type="entry name" value="FAD-bd_PCMH_sub2"/>
</dbReference>
<dbReference type="InterPro" id="IPR038770">
    <property type="entry name" value="Na+/solute_symporter_sf"/>
</dbReference>
<dbReference type="InterPro" id="IPR023729">
    <property type="entry name" value="NhaP2"/>
</dbReference>
<dbReference type="InterPro" id="IPR006037">
    <property type="entry name" value="RCK_C"/>
</dbReference>
<dbReference type="InterPro" id="IPR036721">
    <property type="entry name" value="RCK_C_sf"/>
</dbReference>
<dbReference type="InterPro" id="IPR005170">
    <property type="entry name" value="Transptr-assoc_dom"/>
</dbReference>
<dbReference type="NCBIfam" id="NF003714">
    <property type="entry name" value="PRK05326.1-1"/>
    <property type="match status" value="1"/>
</dbReference>
<dbReference type="NCBIfam" id="NF003715">
    <property type="entry name" value="PRK05326.1-2"/>
    <property type="match status" value="1"/>
</dbReference>
<dbReference type="NCBIfam" id="NF003716">
    <property type="entry name" value="PRK05326.1-3"/>
    <property type="match status" value="1"/>
</dbReference>
<dbReference type="PANTHER" id="PTHR32507:SF7">
    <property type="entry name" value="K(+)_H(+) ANTIPORTER NHAP2"/>
    <property type="match status" value="1"/>
</dbReference>
<dbReference type="PANTHER" id="PTHR32507">
    <property type="entry name" value="NA(+)/H(+) ANTIPORTER 1"/>
    <property type="match status" value="1"/>
</dbReference>
<dbReference type="Pfam" id="PF03471">
    <property type="entry name" value="CorC_HlyC"/>
    <property type="match status" value="1"/>
</dbReference>
<dbReference type="Pfam" id="PF00999">
    <property type="entry name" value="Na_H_Exchanger"/>
    <property type="match status" value="1"/>
</dbReference>
<dbReference type="Pfam" id="PF02080">
    <property type="entry name" value="TrkA_C"/>
    <property type="match status" value="1"/>
</dbReference>
<dbReference type="SMART" id="SM01091">
    <property type="entry name" value="CorC_HlyC"/>
    <property type="match status" value="1"/>
</dbReference>
<dbReference type="SUPFAM" id="SSF56176">
    <property type="entry name" value="FAD-binding/transporter-associated domain-like"/>
    <property type="match status" value="1"/>
</dbReference>
<dbReference type="SUPFAM" id="SSF116726">
    <property type="entry name" value="TrkA C-terminal domain-like"/>
    <property type="match status" value="1"/>
</dbReference>
<dbReference type="PROSITE" id="PS51202">
    <property type="entry name" value="RCK_C"/>
    <property type="match status" value="1"/>
</dbReference>
<keyword id="KW-0050">Antiport</keyword>
<keyword id="KW-0997">Cell inner membrane</keyword>
<keyword id="KW-1003">Cell membrane</keyword>
<keyword id="KW-0406">Ion transport</keyword>
<keyword id="KW-0472">Membrane</keyword>
<keyword id="KW-0630">Potassium</keyword>
<keyword id="KW-0633">Potassium transport</keyword>
<keyword id="KW-0812">Transmembrane</keyword>
<keyword id="KW-1133">Transmembrane helix</keyword>
<keyword id="KW-0813">Transport</keyword>
<comment type="function">
    <text evidence="1">K(+)/H(+) antiporter that extrudes potassium in exchange for external protons and maintains the internal concentration of potassium under toxic levels.</text>
</comment>
<comment type="catalytic activity">
    <reaction evidence="1">
        <text>K(+)(in) + H(+)(out) = K(+)(out) + H(+)(in)</text>
        <dbReference type="Rhea" id="RHEA:29467"/>
        <dbReference type="ChEBI" id="CHEBI:15378"/>
        <dbReference type="ChEBI" id="CHEBI:29103"/>
    </reaction>
    <physiologicalReaction direction="left-to-right" evidence="1">
        <dbReference type="Rhea" id="RHEA:29468"/>
    </physiologicalReaction>
</comment>
<comment type="subcellular location">
    <subcellularLocation>
        <location evidence="1">Cell inner membrane</location>
        <topology evidence="1">Multi-pass membrane protein</topology>
    </subcellularLocation>
</comment>
<comment type="similarity">
    <text evidence="1">Belongs to the monovalent cation:proton antiporter 1 (CPA1) transporter (TC 2.A.36) family. NhaP2 subfamily.</text>
</comment>
<gene>
    <name evidence="1" type="primary">nhaP2</name>
    <name type="synonym">cvrA</name>
    <name type="ordered locus">SPA1072</name>
</gene>
<sequence>MDAATIISLFILGSILVTSSILLSSFSSRLGIPILVIFLAIGMLAGVDGIGGIPFDNYPFAYMVSNLALAIILLDGGMRTQASSFRVALGPALSLATLGVLITSGLTGMMAAWLFHLDLIEGLLIGAIVGSTDAAAVFSLLGGKGLNERVGSTLEIESGSNDPMAVFLTITLIEMIQKHETGLDWMFAVHIIQQFGLGIVFGLGGGYLLQQMINRISLPSGLYPMLALSGGILIFALTTALEGSGILAVYLCGFLLGNRPIRNRYGILQNFDGLAWLAQIAMFLVLGLLVTPSDLWPIAVPALILSIWMIFFARPLSVFTGLLPFRGFNLRERIFISWVGLRGAVPIILAVFPMMAGLENARLFFNVAFFVVLVSLLLQGTSLSWAAKRAKVVVPPVGWPVSRVGLDIHPDNPWEQFIYQLSADKWCVGAALRDLHMPNETRIAALFRNNELFHPTGSTRLQEGDVLCVIGRERDLPALGKLFSQSPPVSLDQRFFGDFILEANAKFADVALIYGLEEGTEYRDKQQTLGEIIQQLLGAAPVVGDQVEFGGMIWTVAEKEDNVVRKIGVRVAEDEAE</sequence>
<feature type="chain" id="PRO_0000052385" description="K(+)/H(+) antiporter NhaP2">
    <location>
        <begin position="1"/>
        <end position="577"/>
    </location>
</feature>
<feature type="transmembrane region" description="Helical" evidence="1">
    <location>
        <begin position="3"/>
        <end position="23"/>
    </location>
</feature>
<feature type="transmembrane region" description="Helical" evidence="1">
    <location>
        <begin position="30"/>
        <end position="50"/>
    </location>
</feature>
<feature type="transmembrane region" description="Helical" evidence="1">
    <location>
        <begin position="58"/>
        <end position="78"/>
    </location>
</feature>
<feature type="transmembrane region" description="Helical" evidence="1">
    <location>
        <begin position="87"/>
        <end position="107"/>
    </location>
</feature>
<feature type="transmembrane region" description="Helical" evidence="1">
    <location>
        <begin position="109"/>
        <end position="129"/>
    </location>
</feature>
<feature type="transmembrane region" description="Helical" evidence="1">
    <location>
        <begin position="185"/>
        <end position="205"/>
    </location>
</feature>
<feature type="transmembrane region" description="Helical" evidence="1">
    <location>
        <begin position="221"/>
        <end position="241"/>
    </location>
</feature>
<feature type="transmembrane region" description="Helical" evidence="1">
    <location>
        <begin position="271"/>
        <end position="291"/>
    </location>
</feature>
<feature type="transmembrane region" description="Helical" evidence="1">
    <location>
        <begin position="293"/>
        <end position="313"/>
    </location>
</feature>
<feature type="transmembrane region" description="Helical" evidence="1">
    <location>
        <begin position="334"/>
        <end position="354"/>
    </location>
</feature>
<feature type="transmembrane region" description="Helical" evidence="1">
    <location>
        <begin position="363"/>
        <end position="383"/>
    </location>
</feature>
<feature type="domain" description="RCK C-terminal" evidence="1">
    <location>
        <begin position="403"/>
        <end position="485"/>
    </location>
</feature>
<protein>
    <recommendedName>
        <fullName evidence="1">K(+)/H(+) antiporter NhaP2</fullName>
    </recommendedName>
    <alternativeName>
        <fullName evidence="1">Potassium/proton antiporter NhaP2</fullName>
    </alternativeName>
</protein>